<sequence>MSTLEVRQVSVAYPGERGRPTTQALAQVDLRIDAGEFVVALGASGCGKTTLLNCMAGFVAPTTGDVRVDGVPIAGPGADRGVVFQKYALLPWLDVLDNVALGLRFARVSKAEREARAREMLTLVGLERHAHARVYELSGGMQQRVGIARALASDPRVLLMDEPMGALDAMTRGTMQALVLDVWARTGKTVFFITHDVEEALFLATRLVVMTPGPGRIAETFELPFARRYVESRDARAVKSSPDFIGWRERLIAYLHRDEAVAEPA</sequence>
<dbReference type="EC" id="7.6.2.7" evidence="1"/>
<dbReference type="EMBL" id="CP000378">
    <property type="protein sequence ID" value="ABF77171.1"/>
    <property type="molecule type" value="Genomic_DNA"/>
</dbReference>
<dbReference type="SMR" id="Q1BT84"/>
<dbReference type="HOGENOM" id="CLU_000604_1_22_4"/>
<dbReference type="GO" id="GO:0005886">
    <property type="term" value="C:plasma membrane"/>
    <property type="evidence" value="ECO:0007669"/>
    <property type="project" value="UniProtKB-SubCell"/>
</dbReference>
<dbReference type="GO" id="GO:0015411">
    <property type="term" value="F:ABC-type taurine transporter transporter activity"/>
    <property type="evidence" value="ECO:0007669"/>
    <property type="project" value="UniProtKB-EC"/>
</dbReference>
<dbReference type="GO" id="GO:0005524">
    <property type="term" value="F:ATP binding"/>
    <property type="evidence" value="ECO:0007669"/>
    <property type="project" value="UniProtKB-KW"/>
</dbReference>
<dbReference type="GO" id="GO:0016887">
    <property type="term" value="F:ATP hydrolysis activity"/>
    <property type="evidence" value="ECO:0007669"/>
    <property type="project" value="InterPro"/>
</dbReference>
<dbReference type="CDD" id="cd03293">
    <property type="entry name" value="ABC_NrtD_SsuB_transporters"/>
    <property type="match status" value="1"/>
</dbReference>
<dbReference type="Gene3D" id="3.40.50.300">
    <property type="entry name" value="P-loop containing nucleotide triphosphate hydrolases"/>
    <property type="match status" value="1"/>
</dbReference>
<dbReference type="InterPro" id="IPR003593">
    <property type="entry name" value="AAA+_ATPase"/>
</dbReference>
<dbReference type="InterPro" id="IPR003439">
    <property type="entry name" value="ABC_transporter-like_ATP-bd"/>
</dbReference>
<dbReference type="InterPro" id="IPR017871">
    <property type="entry name" value="ABC_transporter-like_CS"/>
</dbReference>
<dbReference type="InterPro" id="IPR050166">
    <property type="entry name" value="ABC_transporter_ATP-bind"/>
</dbReference>
<dbReference type="InterPro" id="IPR027417">
    <property type="entry name" value="P-loop_NTPase"/>
</dbReference>
<dbReference type="PANTHER" id="PTHR42788:SF18">
    <property type="entry name" value="TAURINE IMPORT ATP-BINDING PROTEIN TAUB"/>
    <property type="match status" value="1"/>
</dbReference>
<dbReference type="PANTHER" id="PTHR42788">
    <property type="entry name" value="TAURINE IMPORT ATP-BINDING PROTEIN-RELATED"/>
    <property type="match status" value="1"/>
</dbReference>
<dbReference type="Pfam" id="PF00005">
    <property type="entry name" value="ABC_tran"/>
    <property type="match status" value="1"/>
</dbReference>
<dbReference type="SMART" id="SM00382">
    <property type="entry name" value="AAA"/>
    <property type="match status" value="1"/>
</dbReference>
<dbReference type="SUPFAM" id="SSF52540">
    <property type="entry name" value="P-loop containing nucleoside triphosphate hydrolases"/>
    <property type="match status" value="1"/>
</dbReference>
<dbReference type="PROSITE" id="PS00211">
    <property type="entry name" value="ABC_TRANSPORTER_1"/>
    <property type="match status" value="1"/>
</dbReference>
<dbReference type="PROSITE" id="PS50893">
    <property type="entry name" value="ABC_TRANSPORTER_2"/>
    <property type="match status" value="1"/>
</dbReference>
<dbReference type="PROSITE" id="PS51250">
    <property type="entry name" value="TAUB"/>
    <property type="match status" value="1"/>
</dbReference>
<keyword id="KW-0067">ATP-binding</keyword>
<keyword id="KW-0997">Cell inner membrane</keyword>
<keyword id="KW-1003">Cell membrane</keyword>
<keyword id="KW-0472">Membrane</keyword>
<keyword id="KW-0547">Nucleotide-binding</keyword>
<keyword id="KW-1278">Translocase</keyword>
<keyword id="KW-0813">Transport</keyword>
<protein>
    <recommendedName>
        <fullName evidence="1">Taurine import ATP-binding protein TauB</fullName>
        <ecNumber evidence="1">7.6.2.7</ecNumber>
    </recommendedName>
</protein>
<comment type="function">
    <text evidence="1">Part of the ABC transporter complex TauABC involved in taurine import. Responsible for energy coupling to the transport system.</text>
</comment>
<comment type="catalytic activity">
    <reaction evidence="1">
        <text>taurine(out) + ATP + H2O = taurine(in) + ADP + phosphate + H(+)</text>
        <dbReference type="Rhea" id="RHEA:14613"/>
        <dbReference type="ChEBI" id="CHEBI:15377"/>
        <dbReference type="ChEBI" id="CHEBI:15378"/>
        <dbReference type="ChEBI" id="CHEBI:30616"/>
        <dbReference type="ChEBI" id="CHEBI:43474"/>
        <dbReference type="ChEBI" id="CHEBI:456216"/>
        <dbReference type="ChEBI" id="CHEBI:507393"/>
        <dbReference type="EC" id="7.6.2.7"/>
    </reaction>
</comment>
<comment type="subunit">
    <text evidence="1">The complex is composed of two ATP-binding proteins (TauB), two transmembrane proteins (TauC) and a solute-binding protein (TauA).</text>
</comment>
<comment type="subcellular location">
    <subcellularLocation>
        <location evidence="1">Cell inner membrane</location>
        <topology evidence="1">Peripheral membrane protein</topology>
    </subcellularLocation>
</comment>
<comment type="similarity">
    <text evidence="1">Belongs to the ABC transporter superfamily. Taurine importer (TC 3.A.1.17.1) family.</text>
</comment>
<organism>
    <name type="scientific">Burkholderia orbicola (strain AU 1054)</name>
    <dbReference type="NCBI Taxonomy" id="331271"/>
    <lineage>
        <taxon>Bacteria</taxon>
        <taxon>Pseudomonadati</taxon>
        <taxon>Pseudomonadota</taxon>
        <taxon>Betaproteobacteria</taxon>
        <taxon>Burkholderiales</taxon>
        <taxon>Burkholderiaceae</taxon>
        <taxon>Burkholderia</taxon>
        <taxon>Burkholderia cepacia complex</taxon>
        <taxon>Burkholderia orbicola</taxon>
    </lineage>
</organism>
<feature type="chain" id="PRO_0000275821" description="Taurine import ATP-binding protein TauB">
    <location>
        <begin position="1"/>
        <end position="265"/>
    </location>
</feature>
<feature type="domain" description="ABC transporter" evidence="1">
    <location>
        <begin position="6"/>
        <end position="237"/>
    </location>
</feature>
<feature type="binding site" evidence="1">
    <location>
        <begin position="42"/>
        <end position="49"/>
    </location>
    <ligand>
        <name>ATP</name>
        <dbReference type="ChEBI" id="CHEBI:30616"/>
    </ligand>
</feature>
<gene>
    <name evidence="1" type="primary">tauB</name>
    <name type="ordered locus">Bcen_2270</name>
</gene>
<accession>Q1BT84</accession>
<proteinExistence type="inferred from homology"/>
<evidence type="ECO:0000255" key="1">
    <source>
        <dbReference type="HAMAP-Rule" id="MF_01714"/>
    </source>
</evidence>
<reference key="1">
    <citation type="submission" date="2006-05" db="EMBL/GenBank/DDBJ databases">
        <title>Complete sequence of chromosome 1 of Burkholderia cenocepacia AU 1054.</title>
        <authorList>
            <consortium name="US DOE Joint Genome Institute"/>
            <person name="Copeland A."/>
            <person name="Lucas S."/>
            <person name="Lapidus A."/>
            <person name="Barry K."/>
            <person name="Detter J.C."/>
            <person name="Glavina del Rio T."/>
            <person name="Hammon N."/>
            <person name="Israni S."/>
            <person name="Dalin E."/>
            <person name="Tice H."/>
            <person name="Pitluck S."/>
            <person name="Chain P."/>
            <person name="Malfatti S."/>
            <person name="Shin M."/>
            <person name="Vergez L."/>
            <person name="Schmutz J."/>
            <person name="Larimer F."/>
            <person name="Land M."/>
            <person name="Hauser L."/>
            <person name="Kyrpides N."/>
            <person name="Lykidis A."/>
            <person name="LiPuma J.J."/>
            <person name="Konstantinidis K."/>
            <person name="Tiedje J.M."/>
            <person name="Richardson P."/>
        </authorList>
    </citation>
    <scope>NUCLEOTIDE SEQUENCE [LARGE SCALE GENOMIC DNA]</scope>
    <source>
        <strain>AU 1054</strain>
    </source>
</reference>
<name>TAUB_BURO1</name>